<sequence length="210" mass="23390">MPPYTVVYFPVRGRCAALRMLLADQGQSWKEEVVSMETWQEGSLKASCLYGQLPKFQDGDLTLYQSNTILRHLGRTLGLYGKDQREAALVDMVNDGVEDLRCKYLSLIYTNYEAGKDDYVKALPGQLKPFETLLSQNQGGKTFIVGDQISFADYNLLDLLLIHEVLAPGCLDAFPLLSAYVARLSARPKLKAFLASPEHVNLPINGNGKQ</sequence>
<gene>
    <name type="primary">GSTP1</name>
</gene>
<organism>
    <name type="scientific">Pongo abelii</name>
    <name type="common">Sumatran orangutan</name>
    <name type="synonym">Pongo pygmaeus abelii</name>
    <dbReference type="NCBI Taxonomy" id="9601"/>
    <lineage>
        <taxon>Eukaryota</taxon>
        <taxon>Metazoa</taxon>
        <taxon>Chordata</taxon>
        <taxon>Craniata</taxon>
        <taxon>Vertebrata</taxon>
        <taxon>Euteleostomi</taxon>
        <taxon>Mammalia</taxon>
        <taxon>Eutheria</taxon>
        <taxon>Euarchontoglires</taxon>
        <taxon>Primates</taxon>
        <taxon>Haplorrhini</taxon>
        <taxon>Catarrhini</taxon>
        <taxon>Hominidae</taxon>
        <taxon>Pongo</taxon>
    </lineage>
</organism>
<dbReference type="EC" id="2.5.1.18" evidence="2"/>
<dbReference type="EMBL" id="CR859686">
    <property type="protein sequence ID" value="CAH91845.1"/>
    <property type="molecule type" value="mRNA"/>
</dbReference>
<dbReference type="RefSeq" id="NP_001127471.1">
    <property type="nucleotide sequence ID" value="NM_001133999.1"/>
</dbReference>
<dbReference type="SMR" id="Q5R8R5"/>
<dbReference type="FunCoup" id="Q5R8R5">
    <property type="interactions" value="651"/>
</dbReference>
<dbReference type="STRING" id="9601.ENSPPYP00000003460"/>
<dbReference type="Ensembl" id="ENSPPYT00000003583.3">
    <property type="protein sequence ID" value="ENSPPYP00000003460.3"/>
    <property type="gene ID" value="ENSPPYG00000002985.3"/>
</dbReference>
<dbReference type="GeneID" id="100174544"/>
<dbReference type="KEGG" id="pon:100174544"/>
<dbReference type="CTD" id="2950"/>
<dbReference type="eggNOG" id="KOG1695">
    <property type="taxonomic scope" value="Eukaryota"/>
</dbReference>
<dbReference type="GeneTree" id="ENSGT00940000162460"/>
<dbReference type="HOGENOM" id="CLU_860419_0_0_1"/>
<dbReference type="InParanoid" id="Q5R8R5"/>
<dbReference type="OMA" id="KKSCVFG"/>
<dbReference type="OrthoDB" id="4951845at2759"/>
<dbReference type="Proteomes" id="UP000001595">
    <property type="component" value="Chromosome 11"/>
</dbReference>
<dbReference type="GO" id="GO:0005829">
    <property type="term" value="C:cytosol"/>
    <property type="evidence" value="ECO:0007669"/>
    <property type="project" value="Ensembl"/>
</dbReference>
<dbReference type="GO" id="GO:0005739">
    <property type="term" value="C:mitochondrion"/>
    <property type="evidence" value="ECO:0007669"/>
    <property type="project" value="UniProtKB-SubCell"/>
</dbReference>
<dbReference type="GO" id="GO:0005634">
    <property type="term" value="C:nucleus"/>
    <property type="evidence" value="ECO:0007669"/>
    <property type="project" value="UniProtKB-SubCell"/>
</dbReference>
<dbReference type="GO" id="GO:0097057">
    <property type="term" value="C:TRAF2-GSTP1 complex"/>
    <property type="evidence" value="ECO:0007669"/>
    <property type="project" value="Ensembl"/>
</dbReference>
<dbReference type="GO" id="GO:0035731">
    <property type="term" value="F:dinitrosyl-iron complex binding"/>
    <property type="evidence" value="ECO:0007669"/>
    <property type="project" value="Ensembl"/>
</dbReference>
<dbReference type="GO" id="GO:0005504">
    <property type="term" value="F:fatty acid binding"/>
    <property type="evidence" value="ECO:0007669"/>
    <property type="project" value="Ensembl"/>
</dbReference>
<dbReference type="GO" id="GO:0004602">
    <property type="term" value="F:glutathione peroxidase activity"/>
    <property type="evidence" value="ECO:0007669"/>
    <property type="project" value="Ensembl"/>
</dbReference>
<dbReference type="GO" id="GO:0004364">
    <property type="term" value="F:glutathione transferase activity"/>
    <property type="evidence" value="ECO:0000250"/>
    <property type="project" value="UniProtKB"/>
</dbReference>
<dbReference type="GO" id="GO:0035730">
    <property type="term" value="F:S-nitrosoglutathione binding"/>
    <property type="evidence" value="ECO:0007669"/>
    <property type="project" value="Ensembl"/>
</dbReference>
<dbReference type="GO" id="GO:1901687">
    <property type="term" value="P:glutathione derivative biosynthetic process"/>
    <property type="evidence" value="ECO:0000250"/>
    <property type="project" value="UniProtKB"/>
</dbReference>
<dbReference type="GO" id="GO:0006749">
    <property type="term" value="P:glutathione metabolic process"/>
    <property type="evidence" value="ECO:0007669"/>
    <property type="project" value="Ensembl"/>
</dbReference>
<dbReference type="GO" id="GO:0051122">
    <property type="term" value="P:hepoxilin biosynthetic process"/>
    <property type="evidence" value="ECO:0000250"/>
    <property type="project" value="UniProtKB"/>
</dbReference>
<dbReference type="GO" id="GO:0043651">
    <property type="term" value="P:linoleic acid metabolic process"/>
    <property type="evidence" value="ECO:0007669"/>
    <property type="project" value="Ensembl"/>
</dbReference>
<dbReference type="GO" id="GO:0070373">
    <property type="term" value="P:negative regulation of ERK1 and ERK2 cascade"/>
    <property type="evidence" value="ECO:0007669"/>
    <property type="project" value="Ensembl"/>
</dbReference>
<dbReference type="GO" id="GO:2001237">
    <property type="term" value="P:negative regulation of extrinsic apoptotic signaling pathway"/>
    <property type="evidence" value="ECO:0007669"/>
    <property type="project" value="Ensembl"/>
</dbReference>
<dbReference type="GO" id="GO:0032691">
    <property type="term" value="P:negative regulation of interleukin-1 beta production"/>
    <property type="evidence" value="ECO:0007669"/>
    <property type="project" value="Ensembl"/>
</dbReference>
<dbReference type="GO" id="GO:0046329">
    <property type="term" value="P:negative regulation of JNK cascade"/>
    <property type="evidence" value="ECO:0007669"/>
    <property type="project" value="Ensembl"/>
</dbReference>
<dbReference type="GO" id="GO:0071638">
    <property type="term" value="P:negative regulation of monocyte chemotactic protein-1 production"/>
    <property type="evidence" value="ECO:0007669"/>
    <property type="project" value="Ensembl"/>
</dbReference>
<dbReference type="GO" id="GO:0032720">
    <property type="term" value="P:negative regulation of tumor necrosis factor production"/>
    <property type="evidence" value="ECO:0007669"/>
    <property type="project" value="Ensembl"/>
</dbReference>
<dbReference type="GO" id="GO:0006693">
    <property type="term" value="P:prostaglandin metabolic process"/>
    <property type="evidence" value="ECO:0000250"/>
    <property type="project" value="UniProtKB"/>
</dbReference>
<dbReference type="GO" id="GO:0006805">
    <property type="term" value="P:xenobiotic metabolic process"/>
    <property type="evidence" value="ECO:0007669"/>
    <property type="project" value="Ensembl"/>
</dbReference>
<dbReference type="CDD" id="cd03210">
    <property type="entry name" value="GST_C_Pi"/>
    <property type="match status" value="1"/>
</dbReference>
<dbReference type="CDD" id="cd03076">
    <property type="entry name" value="GST_N_Pi"/>
    <property type="match status" value="1"/>
</dbReference>
<dbReference type="FunFam" id="1.20.1050.10:FF:000047">
    <property type="entry name" value="Glutathione S-transferase P"/>
    <property type="match status" value="1"/>
</dbReference>
<dbReference type="FunFam" id="3.40.30.10:FF:000071">
    <property type="entry name" value="Glutathione S-transferase P"/>
    <property type="match status" value="1"/>
</dbReference>
<dbReference type="FunFam" id="3.40.30.10:FF:000392">
    <property type="entry name" value="Glutathione S-transferase pi 1"/>
    <property type="match status" value="1"/>
</dbReference>
<dbReference type="Gene3D" id="1.20.1050.10">
    <property type="match status" value="1"/>
</dbReference>
<dbReference type="Gene3D" id="3.40.30.10">
    <property type="entry name" value="Glutaredoxin"/>
    <property type="match status" value="1"/>
</dbReference>
<dbReference type="InterPro" id="IPR010987">
    <property type="entry name" value="Glutathione-S-Trfase_C-like"/>
</dbReference>
<dbReference type="InterPro" id="IPR036282">
    <property type="entry name" value="Glutathione-S-Trfase_C_sf"/>
</dbReference>
<dbReference type="InterPro" id="IPR040079">
    <property type="entry name" value="Glutathione_S-Trfase"/>
</dbReference>
<dbReference type="InterPro" id="IPR004045">
    <property type="entry name" value="Glutathione_S-Trfase_N"/>
</dbReference>
<dbReference type="InterPro" id="IPR004046">
    <property type="entry name" value="GST_C"/>
</dbReference>
<dbReference type="InterPro" id="IPR003082">
    <property type="entry name" value="GST_pi"/>
</dbReference>
<dbReference type="InterPro" id="IPR050213">
    <property type="entry name" value="GST_superfamily"/>
</dbReference>
<dbReference type="InterPro" id="IPR036249">
    <property type="entry name" value="Thioredoxin-like_sf"/>
</dbReference>
<dbReference type="PANTHER" id="PTHR11571">
    <property type="entry name" value="GLUTATHIONE S-TRANSFERASE"/>
    <property type="match status" value="1"/>
</dbReference>
<dbReference type="PANTHER" id="PTHR11571:SF255">
    <property type="entry name" value="GLUTATHIONE S-TRANSFERASE P"/>
    <property type="match status" value="1"/>
</dbReference>
<dbReference type="Pfam" id="PF14497">
    <property type="entry name" value="GST_C_3"/>
    <property type="match status" value="1"/>
</dbReference>
<dbReference type="Pfam" id="PF02798">
    <property type="entry name" value="GST_N"/>
    <property type="match status" value="1"/>
</dbReference>
<dbReference type="PRINTS" id="PR01268">
    <property type="entry name" value="GSTRNSFRASEP"/>
</dbReference>
<dbReference type="SFLD" id="SFLDG01205">
    <property type="entry name" value="AMPS.1"/>
    <property type="match status" value="1"/>
</dbReference>
<dbReference type="SFLD" id="SFLDS00019">
    <property type="entry name" value="Glutathione_Transferase_(cytos"/>
    <property type="match status" value="1"/>
</dbReference>
<dbReference type="SUPFAM" id="SSF47616">
    <property type="entry name" value="GST C-terminal domain-like"/>
    <property type="match status" value="1"/>
</dbReference>
<dbReference type="SUPFAM" id="SSF52833">
    <property type="entry name" value="Thioredoxin-like"/>
    <property type="match status" value="1"/>
</dbReference>
<dbReference type="PROSITE" id="PS50405">
    <property type="entry name" value="GST_CTER"/>
    <property type="match status" value="1"/>
</dbReference>
<dbReference type="PROSITE" id="PS50404">
    <property type="entry name" value="GST_NTER"/>
    <property type="match status" value="1"/>
</dbReference>
<reference key="1">
    <citation type="submission" date="2004-11" db="EMBL/GenBank/DDBJ databases">
        <authorList>
            <consortium name="The German cDNA consortium"/>
        </authorList>
    </citation>
    <scope>NUCLEOTIDE SEQUENCE [LARGE SCALE MRNA]</scope>
    <source>
        <tissue>Heart</tissue>
    </source>
</reference>
<name>GSTP1_PONAB</name>
<feature type="chain" id="PRO_0000185906" description="Glutathione S-transferase P">
    <location>
        <begin position="1"/>
        <end position="210"/>
    </location>
</feature>
<feature type="domain" description="GST N-terminal">
    <location>
        <begin position="2"/>
        <end position="81"/>
    </location>
</feature>
<feature type="domain" description="GST C-terminal">
    <location>
        <begin position="83"/>
        <end position="204"/>
    </location>
</feature>
<feature type="binding site" evidence="2">
    <location>
        <position position="8"/>
    </location>
    <ligand>
        <name>glutathione</name>
        <dbReference type="ChEBI" id="CHEBI:57925"/>
    </ligand>
</feature>
<feature type="binding site" evidence="2">
    <location>
        <position position="14"/>
    </location>
    <ligand>
        <name>glutathione</name>
        <dbReference type="ChEBI" id="CHEBI:57925"/>
    </ligand>
</feature>
<feature type="binding site" evidence="2">
    <location>
        <position position="39"/>
    </location>
    <ligand>
        <name>glutathione</name>
        <dbReference type="ChEBI" id="CHEBI:57925"/>
    </ligand>
</feature>
<feature type="binding site" evidence="2">
    <location>
        <position position="45"/>
    </location>
    <ligand>
        <name>glutathione</name>
        <dbReference type="ChEBI" id="CHEBI:57925"/>
    </ligand>
</feature>
<feature type="binding site" evidence="2">
    <location>
        <begin position="52"/>
        <end position="53"/>
    </location>
    <ligand>
        <name>glutathione</name>
        <dbReference type="ChEBI" id="CHEBI:57925"/>
    </ligand>
</feature>
<feature type="binding site" evidence="2">
    <location>
        <begin position="65"/>
        <end position="66"/>
    </location>
    <ligand>
        <name>glutathione</name>
        <dbReference type="ChEBI" id="CHEBI:57925"/>
    </ligand>
</feature>
<feature type="modified residue" description="Phosphotyrosine; by EGFR" evidence="2">
    <location>
        <position position="4"/>
    </location>
</feature>
<feature type="modified residue" description="Phosphothreonine" evidence="2">
    <location>
        <position position="62"/>
    </location>
</feature>
<feature type="modified residue" description="N6-succinyllysine" evidence="3">
    <location>
        <position position="103"/>
    </location>
</feature>
<feature type="modified residue" description="N6-succinyllysine" evidence="3">
    <location>
        <position position="116"/>
    </location>
</feature>
<feature type="modified residue" description="N6-acetyllysine" evidence="2">
    <location>
        <position position="128"/>
    </location>
</feature>
<keyword id="KW-0007">Acetylation</keyword>
<keyword id="KW-0963">Cytoplasm</keyword>
<keyword id="KW-0443">Lipid metabolism</keyword>
<keyword id="KW-0496">Mitochondrion</keyword>
<keyword id="KW-0539">Nucleus</keyword>
<keyword id="KW-0597">Phosphoprotein</keyword>
<keyword id="KW-1185">Reference proteome</keyword>
<keyword id="KW-0808">Transferase</keyword>
<proteinExistence type="evidence at transcript level"/>
<accession>Q5R8R5</accession>
<evidence type="ECO:0000250" key="1"/>
<evidence type="ECO:0000250" key="2">
    <source>
        <dbReference type="UniProtKB" id="P09211"/>
    </source>
</evidence>
<evidence type="ECO:0000250" key="3">
    <source>
        <dbReference type="UniProtKB" id="P19157"/>
    </source>
</evidence>
<evidence type="ECO:0000305" key="4"/>
<protein>
    <recommendedName>
        <fullName evidence="4">Glutathione S-transferase P</fullName>
        <ecNumber evidence="2">2.5.1.18</ecNumber>
    </recommendedName>
    <alternativeName>
        <fullName>GST class-pi</fullName>
    </alternativeName>
</protein>
<comment type="function">
    <text evidence="2">Conjugation of reduced glutathione to a wide number of exogenous and endogenous hydrophobic electrophiles. Involved in the formation of glutathione conjugates of both prostaglandin A2 (PGA2) and prostaglandin J2 (PGJ2). Participates in the formation of novel hepoxilin regioisomers. Negatively regulates CDK5 activity via p25/p35 translocation to prevent neurodegeneration.</text>
</comment>
<comment type="catalytic activity">
    <reaction evidence="2">
        <text>RX + glutathione = an S-substituted glutathione + a halide anion + H(+)</text>
        <dbReference type="Rhea" id="RHEA:16437"/>
        <dbReference type="ChEBI" id="CHEBI:15378"/>
        <dbReference type="ChEBI" id="CHEBI:16042"/>
        <dbReference type="ChEBI" id="CHEBI:17792"/>
        <dbReference type="ChEBI" id="CHEBI:57925"/>
        <dbReference type="ChEBI" id="CHEBI:90779"/>
        <dbReference type="EC" id="2.5.1.18"/>
    </reaction>
    <physiologicalReaction direction="left-to-right" evidence="2">
        <dbReference type="Rhea" id="RHEA:16438"/>
    </physiologicalReaction>
</comment>
<comment type="catalytic activity">
    <reaction evidence="2">
        <text>prostaglandin J2 + glutathione = prostaglandin J2-S-(R)-glutathione</text>
        <dbReference type="Rhea" id="RHEA:50804"/>
        <dbReference type="ChEBI" id="CHEBI:57925"/>
        <dbReference type="ChEBI" id="CHEBI:133396"/>
        <dbReference type="ChEBI" id="CHEBI:133771"/>
    </reaction>
    <physiologicalReaction direction="left-to-right" evidence="2">
        <dbReference type="Rhea" id="RHEA:50805"/>
    </physiologicalReaction>
</comment>
<comment type="catalytic activity">
    <reaction evidence="2">
        <text>prostaglandin J2 + glutathione = prostaglandin J2-S-(S)-glutathione</text>
        <dbReference type="Rhea" id="RHEA:50808"/>
        <dbReference type="ChEBI" id="CHEBI:57925"/>
        <dbReference type="ChEBI" id="CHEBI:133396"/>
        <dbReference type="ChEBI" id="CHEBI:133772"/>
    </reaction>
    <physiologicalReaction direction="left-to-right" evidence="2">
        <dbReference type="Rhea" id="RHEA:50809"/>
    </physiologicalReaction>
</comment>
<comment type="catalytic activity">
    <reaction evidence="2">
        <text>prostaglandin A2 + glutathione = prostaglandin A2-S-(S)-glutathione</text>
        <dbReference type="Rhea" id="RHEA:50800"/>
        <dbReference type="ChEBI" id="CHEBI:57925"/>
        <dbReference type="ChEBI" id="CHEBI:133370"/>
        <dbReference type="ChEBI" id="CHEBI:133769"/>
    </reaction>
    <physiologicalReaction direction="left-to-right" evidence="2">
        <dbReference type="Rhea" id="RHEA:50801"/>
    </physiologicalReaction>
</comment>
<comment type="catalytic activity">
    <reaction evidence="2">
        <text>11(S)-hydroxy-14(S),15(S)-epoxy-(5Z,8Z,12E)-eicosatrienoate + glutathione = (11S,15S)-dihydroxy-14(R)-S-glutathionyl-(5Z,8Z,12E)-eicosatrienoate</text>
        <dbReference type="Rhea" id="RHEA:50260"/>
        <dbReference type="ChEBI" id="CHEBI:57925"/>
        <dbReference type="ChEBI" id="CHEBI:132200"/>
        <dbReference type="ChEBI" id="CHEBI:132201"/>
    </reaction>
    <physiologicalReaction direction="left-to-right" evidence="2">
        <dbReference type="Rhea" id="RHEA:50261"/>
    </physiologicalReaction>
</comment>
<comment type="subunit">
    <text evidence="1">Homodimer. Interacts with CDK5.</text>
</comment>
<comment type="subcellular location">
    <subcellularLocation>
        <location evidence="1">Cytoplasm</location>
    </subcellularLocation>
    <subcellularLocation>
        <location evidence="1">Mitochondrion</location>
    </subcellularLocation>
    <subcellularLocation>
        <location evidence="1">Nucleus</location>
    </subcellularLocation>
    <text evidence="1">The 83 N-terminal amino acids function as un uncleaved transit peptide, and arginine residues within it are crucial for mitochondrial localization.</text>
</comment>
<comment type="similarity">
    <text evidence="4">Belongs to the GST superfamily. Pi family.</text>
</comment>